<comment type="function">
    <text evidence="1">Catalyzes the first step in the D-alanylation of lipoteichoic acid (LTA), the activation of D-alanine and its transfer onto the D-alanyl carrier protein (Dcp) DltC. In an ATP-dependent two-step reaction, forms a high energy D-alanyl-AMP intermediate, followed by transfer of the D-alanyl residue as a thiol ester to the phosphopantheinyl prosthetic group of the Dcp. D-alanylation of LTA plays an important role in modulating the properties of the cell wall in Gram-positive bacteria, influencing the net charge of the cell wall.</text>
</comment>
<comment type="catalytic activity">
    <reaction evidence="1">
        <text>holo-[D-alanyl-carrier protein] + D-alanine + ATP = D-alanyl-[D-alanyl-carrier protein] + AMP + diphosphate</text>
        <dbReference type="Rhea" id="RHEA:55132"/>
        <dbReference type="Rhea" id="RHEA-COMP:14102"/>
        <dbReference type="Rhea" id="RHEA-COMP:14103"/>
        <dbReference type="ChEBI" id="CHEBI:30616"/>
        <dbReference type="ChEBI" id="CHEBI:33019"/>
        <dbReference type="ChEBI" id="CHEBI:57416"/>
        <dbReference type="ChEBI" id="CHEBI:64479"/>
        <dbReference type="ChEBI" id="CHEBI:138620"/>
        <dbReference type="ChEBI" id="CHEBI:456215"/>
        <dbReference type="EC" id="6.2.1.54"/>
    </reaction>
</comment>
<comment type="pathway">
    <text evidence="1">Cell wall biogenesis; lipoteichoic acid biosynthesis.</text>
</comment>
<comment type="subcellular location">
    <subcellularLocation>
        <location evidence="1">Cytoplasm</location>
    </subcellularLocation>
</comment>
<comment type="similarity">
    <text evidence="1">Belongs to the ATP-dependent AMP-binding enzyme family. DltA subfamily.</text>
</comment>
<accession>Q2FZW6</accession>
<accession>P68877</accession>
<accession>Q53661</accession>
<accession>Q9S673</accession>
<organism>
    <name type="scientific">Staphylococcus aureus (strain NCTC 8325 / PS 47)</name>
    <dbReference type="NCBI Taxonomy" id="93061"/>
    <lineage>
        <taxon>Bacteria</taxon>
        <taxon>Bacillati</taxon>
        <taxon>Bacillota</taxon>
        <taxon>Bacilli</taxon>
        <taxon>Bacillales</taxon>
        <taxon>Staphylococcaceae</taxon>
        <taxon>Staphylococcus</taxon>
    </lineage>
</organism>
<reference key="1">
    <citation type="journal article" date="1999" name="J. Biol. Chem.">
        <title>Inactivation of the dlt operon in Staphylococcus aureus confers sensitivity to defensins, protegrins, and other antimicrobial peptides.</title>
        <authorList>
            <person name="Peschel A."/>
            <person name="Otto M."/>
            <person name="Jack R.W."/>
            <person name="Kalbacher H."/>
            <person name="Jung G."/>
            <person name="Goetz F."/>
        </authorList>
    </citation>
    <scope>NUCLEOTIDE SEQUENCE [GENOMIC DNA]</scope>
</reference>
<reference key="2">
    <citation type="book" date="2006" name="Gram positive pathogens, 2nd edition">
        <title>The Staphylococcus aureus NCTC 8325 genome.</title>
        <editorList>
            <person name="Fischetti V."/>
            <person name="Novick R."/>
            <person name="Ferretti J."/>
            <person name="Portnoy D."/>
            <person name="Rood J."/>
        </editorList>
        <authorList>
            <person name="Gillaspy A.F."/>
            <person name="Worrell V."/>
            <person name="Orvis J."/>
            <person name="Roe B.A."/>
            <person name="Dyer D.W."/>
            <person name="Iandolo J.J."/>
        </authorList>
    </citation>
    <scope>NUCLEOTIDE SEQUENCE [LARGE SCALE GENOMIC DNA]</scope>
    <source>
        <strain>NCTC 8325 / PS 47</strain>
    </source>
</reference>
<protein>
    <recommendedName>
        <fullName evidence="1">D-alanine--D-alanyl carrier protein ligase</fullName>
        <shortName evidence="1">DCL</shortName>
        <ecNumber evidence="1">6.2.1.54</ecNumber>
    </recommendedName>
    <alternativeName>
        <fullName evidence="1">D-alanine--poly(phosphoribitol) ligase subunit 1</fullName>
    </alternativeName>
    <alternativeName>
        <fullName evidence="1">D-alanine-activating enzyme</fullName>
        <shortName evidence="1">DAE</shortName>
    </alternativeName>
</protein>
<proteinExistence type="inferred from homology"/>
<name>DLTA_STAA8</name>
<feature type="chain" id="PRO_0000289546" description="D-alanine--D-alanyl carrier protein ligase">
    <location>
        <begin position="1"/>
        <end position="485"/>
    </location>
</feature>
<feature type="binding site" evidence="1">
    <location>
        <begin position="144"/>
        <end position="145"/>
    </location>
    <ligand>
        <name>ATP</name>
        <dbReference type="ChEBI" id="CHEBI:30616"/>
    </ligand>
</feature>
<feature type="binding site" evidence="1">
    <location>
        <position position="189"/>
    </location>
    <ligand>
        <name>D-alanine</name>
        <dbReference type="ChEBI" id="CHEBI:57416"/>
    </ligand>
</feature>
<feature type="binding site" evidence="1">
    <location>
        <begin position="284"/>
        <end position="289"/>
    </location>
    <ligand>
        <name>ATP</name>
        <dbReference type="ChEBI" id="CHEBI:30616"/>
    </ligand>
</feature>
<feature type="binding site" evidence="1">
    <location>
        <position position="293"/>
    </location>
    <ligand>
        <name>D-alanine</name>
        <dbReference type="ChEBI" id="CHEBI:57416"/>
    </ligand>
</feature>
<feature type="binding site" evidence="1">
    <location>
        <position position="365"/>
    </location>
    <ligand>
        <name>ATP</name>
        <dbReference type="ChEBI" id="CHEBI:30616"/>
    </ligand>
</feature>
<feature type="binding site" evidence="1">
    <location>
        <position position="473"/>
    </location>
    <ligand>
        <name>ATP</name>
        <dbReference type="ChEBI" id="CHEBI:30616"/>
    </ligand>
</feature>
<feature type="binding site" evidence="1">
    <location>
        <position position="473"/>
    </location>
    <ligand>
        <name>D-alanine</name>
        <dbReference type="ChEBI" id="CHEBI:57416"/>
    </ligand>
</feature>
<sequence length="485" mass="54670">MTDIINKLQAFADANPQSIAVRHTTDELTYQQLMDESSKLAHRLQGSKKPMILFGHMSPYMIVGMIGAIKAGCGYVPVDTSIPEDRIKMIINKVQPEFVFNTTDESFESLEGEVFTIEDIKTSQDPVIFDSQIKDNDTVYTIFTSGSTGEPKGVQIEYASLVQFTEWMLELNKSGNEQQWLNQAPFSFDLSVMAIYPCLASGGTLNLVDKNMINKPKLLNEMLTATPINIWVSTPSFMEMCLLLPTLNEEQYGSLNEFFFCGEILPHRAAKALVNRFPSATIYNTYGPTEATVAVTSIQITQEILDQYPTLPVGVERPGARLSTTDEGELVIEGQSVSLGYLKNDQKTAEVFNFDDGIRTYHTGDKAKFENGQWFIQGRIDFQIKLNGYRMELEEIETQLRQSEFVKEAIVVPVYKNDKVIHLIGAIVPTTEVTDNAEMTKNIKNDLKSRLPEYMIPRKFEWMEQLPLTSNGKIDRKKIAEVING</sequence>
<keyword id="KW-0067">ATP-binding</keyword>
<keyword id="KW-0963">Cytoplasm</keyword>
<keyword id="KW-0436">Ligase</keyword>
<keyword id="KW-0547">Nucleotide-binding</keyword>
<keyword id="KW-1185">Reference proteome</keyword>
<evidence type="ECO:0000255" key="1">
    <source>
        <dbReference type="HAMAP-Rule" id="MF_00593"/>
    </source>
</evidence>
<gene>
    <name evidence="1" type="primary">dltA</name>
    <name type="ordered locus">SAOUHSC_00869</name>
</gene>
<dbReference type="EC" id="6.2.1.54" evidence="1"/>
<dbReference type="EMBL" id="AF101234">
    <property type="protein sequence ID" value="AAD21957.1"/>
    <property type="molecule type" value="Genomic_DNA"/>
</dbReference>
<dbReference type="EMBL" id="CP000253">
    <property type="protein sequence ID" value="ABD29994.1"/>
    <property type="molecule type" value="Genomic_DNA"/>
</dbReference>
<dbReference type="RefSeq" id="WP_000129653.1">
    <property type="nucleotide sequence ID" value="NZ_LS483365.1"/>
</dbReference>
<dbReference type="RefSeq" id="YP_499422.1">
    <property type="nucleotide sequence ID" value="NC_007795.1"/>
</dbReference>
<dbReference type="SMR" id="Q2FZW6"/>
<dbReference type="STRING" id="93061.SAOUHSC_00869"/>
<dbReference type="PaxDb" id="1280-SAXN108_0927"/>
<dbReference type="GeneID" id="3919216"/>
<dbReference type="KEGG" id="sao:SAOUHSC_00869"/>
<dbReference type="PATRIC" id="fig|93061.5.peg.789"/>
<dbReference type="eggNOG" id="COG1020">
    <property type="taxonomic scope" value="Bacteria"/>
</dbReference>
<dbReference type="HOGENOM" id="CLU_000022_2_12_9"/>
<dbReference type="OrthoDB" id="9765680at2"/>
<dbReference type="BioCyc" id="MetaCyc:MONOMER-19990"/>
<dbReference type="UniPathway" id="UPA00556"/>
<dbReference type="PRO" id="PR:Q2FZW6"/>
<dbReference type="Proteomes" id="UP000008816">
    <property type="component" value="Chromosome"/>
</dbReference>
<dbReference type="GO" id="GO:0005737">
    <property type="term" value="C:cytoplasm"/>
    <property type="evidence" value="ECO:0007669"/>
    <property type="project" value="UniProtKB-SubCell"/>
</dbReference>
<dbReference type="GO" id="GO:0005524">
    <property type="term" value="F:ATP binding"/>
    <property type="evidence" value="ECO:0007669"/>
    <property type="project" value="UniProtKB-KW"/>
</dbReference>
<dbReference type="GO" id="GO:0047473">
    <property type="term" value="F:D-alanine [D-alanyl carrier protein] ligase activity"/>
    <property type="evidence" value="ECO:0007669"/>
    <property type="project" value="UniProtKB-UniRule"/>
</dbReference>
<dbReference type="GO" id="GO:0070395">
    <property type="term" value="P:lipoteichoic acid biosynthetic process"/>
    <property type="evidence" value="ECO:0007669"/>
    <property type="project" value="UniProtKB-UniRule"/>
</dbReference>
<dbReference type="CDD" id="cd05945">
    <property type="entry name" value="DltA"/>
    <property type="match status" value="1"/>
</dbReference>
<dbReference type="FunFam" id="3.30.300.30:FF:000012">
    <property type="entry name" value="D-alanine--D-alanyl carrier protein ligase"/>
    <property type="match status" value="1"/>
</dbReference>
<dbReference type="Gene3D" id="3.30.300.30">
    <property type="match status" value="1"/>
</dbReference>
<dbReference type="Gene3D" id="3.40.50.12780">
    <property type="entry name" value="N-terminal domain of ligase-like"/>
    <property type="match status" value="1"/>
</dbReference>
<dbReference type="HAMAP" id="MF_00593">
    <property type="entry name" value="DltA"/>
    <property type="match status" value="1"/>
</dbReference>
<dbReference type="InterPro" id="IPR010071">
    <property type="entry name" value="AA_adenyl_dom"/>
</dbReference>
<dbReference type="InterPro" id="IPR025110">
    <property type="entry name" value="AMP-bd_C"/>
</dbReference>
<dbReference type="InterPro" id="IPR045851">
    <property type="entry name" value="AMP-bd_C_sf"/>
</dbReference>
<dbReference type="InterPro" id="IPR000873">
    <property type="entry name" value="AMP-dep_synth/lig_dom"/>
</dbReference>
<dbReference type="InterPro" id="IPR042099">
    <property type="entry name" value="ANL_N_sf"/>
</dbReference>
<dbReference type="InterPro" id="IPR010072">
    <property type="entry name" value="DltA"/>
</dbReference>
<dbReference type="InterPro" id="IPR044507">
    <property type="entry name" value="DltA-like"/>
</dbReference>
<dbReference type="NCBIfam" id="TIGR01733">
    <property type="entry name" value="AA-adenyl-dom"/>
    <property type="match status" value="1"/>
</dbReference>
<dbReference type="NCBIfam" id="TIGR01734">
    <property type="entry name" value="D-ala-DACP-lig"/>
    <property type="match status" value="1"/>
</dbReference>
<dbReference type="NCBIfam" id="NF003417">
    <property type="entry name" value="PRK04813.1"/>
    <property type="match status" value="1"/>
</dbReference>
<dbReference type="PANTHER" id="PTHR45398">
    <property type="match status" value="1"/>
</dbReference>
<dbReference type="PANTHER" id="PTHR45398:SF1">
    <property type="entry name" value="ENZYME, PUTATIVE (JCVI)-RELATED"/>
    <property type="match status" value="1"/>
</dbReference>
<dbReference type="Pfam" id="PF00501">
    <property type="entry name" value="AMP-binding"/>
    <property type="match status" value="1"/>
</dbReference>
<dbReference type="Pfam" id="PF13193">
    <property type="entry name" value="AMP-binding_C"/>
    <property type="match status" value="1"/>
</dbReference>
<dbReference type="SUPFAM" id="SSF56801">
    <property type="entry name" value="Acetyl-CoA synthetase-like"/>
    <property type="match status" value="1"/>
</dbReference>